<proteinExistence type="evidence at protein level"/>
<name>SGIP1_MOUSE</name>
<feature type="chain" id="PRO_0000248396" description="SH3-containing GRB2-like protein 3-interacting protein 1">
    <location>
        <begin position="1"/>
        <end position="806"/>
    </location>
</feature>
<feature type="domain" description="MHD" evidence="3">
    <location>
        <begin position="537"/>
        <end position="805"/>
    </location>
</feature>
<feature type="region of interest" description="Disordered" evidence="4">
    <location>
        <begin position="1"/>
        <end position="115"/>
    </location>
</feature>
<feature type="region of interest" description="Disordered" evidence="4">
    <location>
        <begin position="142"/>
        <end position="278"/>
    </location>
</feature>
<feature type="region of interest" description="Disordered" evidence="4">
    <location>
        <begin position="315"/>
        <end position="533"/>
    </location>
</feature>
<feature type="region of interest" description="Interaction with DPF motifs-containing proteins" evidence="2">
    <location>
        <begin position="539"/>
        <end position="545"/>
    </location>
</feature>
<feature type="region of interest" description="Interaction with DPF motifs-containing proteins" evidence="2">
    <location>
        <begin position="571"/>
        <end position="573"/>
    </location>
</feature>
<feature type="region of interest" description="Necessary and sufficient to mediate interaction with CANX" evidence="7">
    <location>
        <begin position="627"/>
        <end position="806"/>
    </location>
</feature>
<feature type="region of interest" description="Interaction with DPF motifs-containing proteins" evidence="2">
    <location>
        <begin position="645"/>
        <end position="648"/>
    </location>
</feature>
<feature type="region of interest" description="Interaction with DPF motifs-containing proteins" evidence="2">
    <location>
        <begin position="791"/>
        <end position="796"/>
    </location>
</feature>
<feature type="compositionally biased region" description="Basic and acidic residues" evidence="4">
    <location>
        <begin position="16"/>
        <end position="32"/>
    </location>
</feature>
<feature type="compositionally biased region" description="Basic and acidic residues" evidence="4">
    <location>
        <begin position="40"/>
        <end position="54"/>
    </location>
</feature>
<feature type="compositionally biased region" description="Pro residues" evidence="4">
    <location>
        <begin position="245"/>
        <end position="260"/>
    </location>
</feature>
<feature type="compositionally biased region" description="Polar residues" evidence="4">
    <location>
        <begin position="265"/>
        <end position="276"/>
    </location>
</feature>
<feature type="compositionally biased region" description="Basic and acidic residues" evidence="4">
    <location>
        <begin position="315"/>
        <end position="324"/>
    </location>
</feature>
<feature type="compositionally biased region" description="Low complexity" evidence="4">
    <location>
        <begin position="335"/>
        <end position="345"/>
    </location>
</feature>
<feature type="compositionally biased region" description="Pro residues" evidence="4">
    <location>
        <begin position="346"/>
        <end position="369"/>
    </location>
</feature>
<feature type="compositionally biased region" description="Basic and acidic residues" evidence="4">
    <location>
        <begin position="377"/>
        <end position="392"/>
    </location>
</feature>
<feature type="compositionally biased region" description="Low complexity" evidence="4">
    <location>
        <begin position="436"/>
        <end position="453"/>
    </location>
</feature>
<feature type="compositionally biased region" description="Pro residues" evidence="4">
    <location>
        <begin position="454"/>
        <end position="473"/>
    </location>
</feature>
<feature type="compositionally biased region" description="Low complexity" evidence="4">
    <location>
        <begin position="480"/>
        <end position="490"/>
    </location>
</feature>
<feature type="compositionally biased region" description="Low complexity" evidence="4">
    <location>
        <begin position="497"/>
        <end position="520"/>
    </location>
</feature>
<feature type="modified residue" description="Phosphoserine" evidence="13">
    <location>
        <position position="78"/>
    </location>
</feature>
<feature type="modified residue" description="Phosphoserine" evidence="1">
    <location>
        <position position="104"/>
    </location>
</feature>
<feature type="modified residue" description="Phosphoserine" evidence="1">
    <location>
        <position position="105"/>
    </location>
</feature>
<feature type="modified residue" description="Phosphoserine" evidence="1">
    <location>
        <position position="107"/>
    </location>
</feature>
<feature type="modified residue" description="Phosphoserine" evidence="13">
    <location>
        <position position="149"/>
    </location>
</feature>
<feature type="modified residue" description="Phosphoserine" evidence="13">
    <location>
        <position position="151"/>
    </location>
</feature>
<feature type="modified residue" description="Phosphoserine" evidence="13">
    <location>
        <position position="156"/>
    </location>
</feature>
<feature type="modified residue" description="Phosphoserine" evidence="1">
    <location>
        <position position="169"/>
    </location>
</feature>
<feature type="modified residue" description="Phosphothreonine" evidence="13">
    <location>
        <position position="180"/>
    </location>
</feature>
<feature type="modified residue" description="Phosphothreonine" evidence="13">
    <location>
        <position position="182"/>
    </location>
</feature>
<feature type="modified residue" description="Phosphoserine" evidence="1">
    <location>
        <position position="236"/>
    </location>
</feature>
<feature type="modified residue" description="Phosphothreonine" evidence="13">
    <location>
        <position position="247"/>
    </location>
</feature>
<feature type="modified residue" description="Phosphothreonine" evidence="13">
    <location>
        <position position="259"/>
    </location>
</feature>
<feature type="modified residue" description="Phosphoserine" evidence="13">
    <location>
        <position position="265"/>
    </location>
</feature>
<feature type="modified residue" description="Phosphoserine" evidence="13">
    <location>
        <position position="287"/>
    </location>
</feature>
<feature type="modified residue" description="Phosphoserine" evidence="13">
    <location>
        <position position="289"/>
    </location>
</feature>
<feature type="modified residue" description="Phosphoserine" evidence="12 13">
    <location>
        <position position="300"/>
    </location>
</feature>
<feature type="modified residue" description="Phosphoserine" evidence="13">
    <location>
        <position position="316"/>
    </location>
</feature>
<feature type="modified residue" description="Phosphoserine" evidence="13">
    <location>
        <position position="319"/>
    </location>
</feature>
<feature type="modified residue" description="Phosphothreonine" evidence="13">
    <location>
        <position position="324"/>
    </location>
</feature>
<feature type="modified residue" description="Phosphothreonine" evidence="13">
    <location>
        <position position="328"/>
    </location>
</feature>
<feature type="modified residue" description="Phosphothreonine" evidence="1">
    <location>
        <position position="335"/>
    </location>
</feature>
<feature type="modified residue" description="Phosphoserine" evidence="13">
    <location>
        <position position="371"/>
    </location>
</feature>
<feature type="modified residue" description="Phosphoserine" evidence="13">
    <location>
        <position position="398"/>
    </location>
</feature>
<feature type="modified residue" description="Phosphothreonine" evidence="13">
    <location>
        <position position="409"/>
    </location>
</feature>
<feature type="modified residue" description="Phosphoserine" evidence="13">
    <location>
        <position position="484"/>
    </location>
</feature>
<feature type="splice variant" id="VSP_043987" description="In isoform 6." evidence="9">
    <original>M</original>
    <variation>MQGKKKAQKTQLLLTSCFWLRALSLTLSQ</variation>
    <location>
        <position position="33"/>
    </location>
</feature>
<feature type="splice variant" id="VSP_020279" description="In isoform 3 and isoform 4." evidence="8">
    <location>
        <position position="34"/>
    </location>
</feature>
<feature type="splice variant" id="VSP_020280" description="In isoform 2." evidence="8">
    <location>
        <begin position="35"/>
        <end position="58"/>
    </location>
</feature>
<feature type="splice variant" id="VSP_020281" description="In isoform 5." evidence="8">
    <original>RKSPRRSPGAIKRNLSSEEVARPRRSTPTPELTSK</original>
    <variation>VKKLQDPGVPPQLQNLQARSLWMTLWPLLPSLVHH</variation>
    <location>
        <begin position="154"/>
        <end position="188"/>
    </location>
</feature>
<feature type="splice variant" id="VSP_020282" description="In isoform 2." evidence="8">
    <location>
        <begin position="154"/>
        <end position="161"/>
    </location>
</feature>
<feature type="splice variant" id="VSP_020283" description="In isoform 5." evidence="8">
    <location>
        <begin position="189"/>
        <end position="806"/>
    </location>
</feature>
<feature type="splice variant" id="VSP_020284" description="In isoform 2, isoform 3 and isoform 4." evidence="8">
    <location>
        <begin position="272"/>
        <end position="437"/>
    </location>
</feature>
<feature type="splice variant" id="VSP_020285" description="In isoform 3, isoform 6 and isoform 7." evidence="8 9">
    <original>V</original>
    <variation>VENEQPSLVWFDRGKFYLTFE</variation>
    <location>
        <position position="521"/>
    </location>
</feature>
<feature type="sequence conflict" description="In Ref. 2; BAC27870." evidence="10" ref="2">
    <original>H</original>
    <variation>Q</variation>
    <location>
        <position position="100"/>
    </location>
</feature>
<feature type="sequence conflict" description="In Ref. 2; BAE28466." evidence="10" ref="2">
    <original>P</original>
    <variation>H</variation>
    <location>
        <position position="250"/>
    </location>
</feature>
<feature type="sequence conflict" description="In Ref. 1; BAF74784." evidence="10" ref="1">
    <original>T</original>
    <variation>P</variation>
    <location>
        <position position="355"/>
    </location>
</feature>
<feature type="modified residue" description="Phosphoserine" evidence="13">
    <location sequence="Q8VD37-2">
        <position position="243"/>
    </location>
</feature>
<feature type="modified residue" description="Phosphoserine" evidence="13">
    <location sequence="Q8VD37-3">
        <position position="274"/>
    </location>
</feature>
<feature type="modified residue" description="Phosphoserine" evidence="13">
    <location sequence="Q8VD37-3">
        <position position="338"/>
    </location>
</feature>
<feature type="modified residue" description="Phosphoserine" evidence="13">
    <location sequence="Q8VD37-4">
        <position position="274"/>
    </location>
</feature>
<feature type="modified residue" description="Phosphoserine" evidence="13">
    <location sequence="Q8VD37-6">
        <position position="533"/>
    </location>
</feature>
<feature type="modified residue" description="Phosphoserine" evidence="13">
    <location sequence="Q8VD37-8">
        <position position="505"/>
    </location>
</feature>
<gene>
    <name type="primary">Sgip1</name>
</gene>
<sequence length="806" mass="86063">MMEGLKKRTRKAFGIRKKEKDTDSTGSPDRDGMQPSPHEPPYHSKAECAREGGKKASKKSNGAPNGFYAEIDWERYNSPELDEEGYSIRPEEPGSTKGKHFYSSSESEEEEESHKKFNIKIKPLQSKDVLKNAATVDELKASIGNIALSPSPVRKSPRRSPGAIKRNLSSEEVARPRRSTPTPELTSKKPLDDTLALAPLFGPPLESAFDEQKTEVLLDQPEIWGSGQPMNPSTESPELARPFPTGTPPPLPPKTVPATPPRTGSPLTVATGNDQAATEAKIEKLPSISDLDSIFGPVLSPKSVAVNTEEKWVHFSDASPEHVTPELTPREQVVTPPAASDIPADSPAPAPPGPTGSAGPPGPPGPRHVPSPLNLEEVQKKVAEQTFIKDDYLETLSSPKECGLGQRATPPPPPPPTYRTVVSSPGPGSGSGTGTTSGASSPARPATPLVPCSTTPPPPPPRPPSRPKLPPGKPGVGDVSRPFSPPIHSSSPPPIAPLARAESTSSISSTNSLSAATTPTVGSSRGPSPLTMGAQDTLPVAAAFTETVNAYFKGADPSKCIVKITGEMVLSFPAGITRHFANNPSPAALTFRVVNSSRLEHVLPNPQLLCCDNTQNDANTKEFWVNMPNLMTHLKKVSEQKPQATYYNVDMLKYQVSAQGIQSTPLNLAVNWRCEPASTDLRIDYKYNTDAMSTAVALNNVQFLVPIDGGVTKLQAVLPPAVWNAEQQRILWKIPDISQKSENGGVGSLLARFQLSEGPSKPSPLVVQFTSEGSTLSGCDIELVGAGYRFSLIKKRFAAGKYLADN</sequence>
<keyword id="KW-0025">Alternative splicing</keyword>
<keyword id="KW-0168">Coated pit</keyword>
<keyword id="KW-0254">Endocytosis</keyword>
<keyword id="KW-0472">Membrane</keyword>
<keyword id="KW-0597">Phosphoprotein</keyword>
<keyword id="KW-1185">Reference proteome</keyword>
<organism>
    <name type="scientific">Mus musculus</name>
    <name type="common">Mouse</name>
    <dbReference type="NCBI Taxonomy" id="10090"/>
    <lineage>
        <taxon>Eukaryota</taxon>
        <taxon>Metazoa</taxon>
        <taxon>Chordata</taxon>
        <taxon>Craniata</taxon>
        <taxon>Vertebrata</taxon>
        <taxon>Euteleostomi</taxon>
        <taxon>Mammalia</taxon>
        <taxon>Eutheria</taxon>
        <taxon>Euarchontoglires</taxon>
        <taxon>Glires</taxon>
        <taxon>Rodentia</taxon>
        <taxon>Myomorpha</taxon>
        <taxon>Muroidea</taxon>
        <taxon>Muridae</taxon>
        <taxon>Murinae</taxon>
        <taxon>Mus</taxon>
        <taxon>Mus</taxon>
    </lineage>
</organism>
<comment type="function">
    <text evidence="6 7">May function in clathrin-mediated endocytosis. Has both a membrane binding/tubulating activity and the ability to recruit proteins essential to the formation of functional clathrin-coated pits. Has a preference for membranes enriched in phosphatidylserine and phosphoinositides and is required for the endocytosis of the transferrin receptor. May also bind tubulin. May play a role in the regulation of energy homeostasis.</text>
</comment>
<comment type="subunit">
    <text evidence="2 6 7 10">Interacts with proteins essential or regulating the formation of functional clathrin-coated pits (Probable). Interacts with CANX (PubMed:17626015, PubMed:21747946). Interacts with AP2A1 (PubMed:17626015). Interacts with EPS15 (PubMed:17626015). Interacts with SH3GL3 (By similarity). Interacts with AMPH (By similarity). Interacts with ITSN1 (via SH3 domains) (By similarity). Interacts with and REPS1 (By similarity).</text>
</comment>
<comment type="interaction">
    <interactant intactId="EBI-776269">
        <id>Q8VD37</id>
    </interactant>
    <interactant intactId="EBI-738422">
        <id>P35564</id>
        <label>Canx</label>
    </interactant>
    <organismsDiffer>false</organismsDiffer>
    <experiments>3</experiments>
</comment>
<comment type="interaction">
    <interactant intactId="EBI-776269">
        <id>Q8VD37</id>
    </interactant>
    <interactant intactId="EBI-6095043">
        <id>A7BFV9</id>
        <label>Eps15</label>
    </interactant>
    <organismsDiffer>true</organismsDiffer>
    <experiments>4</experiments>
</comment>
<comment type="subcellular location">
    <subcellularLocation>
        <location evidence="11">Membrane</location>
        <location evidence="11">Clathrin-coated pit</location>
        <topology evidence="11">Peripheral membrane protein</topology>
        <orientation evidence="11">Cytoplasmic side</orientation>
    </subcellularLocation>
</comment>
<comment type="alternative products">
    <event type="alternative splicing"/>
    <isoform>
        <id>Q8VD37-1</id>
        <name>1</name>
        <sequence type="displayed"/>
    </isoform>
    <isoform>
        <id>Q8VD37-2</id>
        <name>2</name>
        <sequence type="described" ref="VSP_020280 VSP_020282 VSP_020284"/>
    </isoform>
    <isoform>
        <id>Q8VD37-3</id>
        <name>3</name>
        <sequence type="described" ref="VSP_020279 VSP_020284 VSP_020285"/>
    </isoform>
    <isoform>
        <id>Q8VD37-4</id>
        <name>4</name>
        <sequence type="described" ref="VSP_020279 VSP_020284"/>
    </isoform>
    <isoform>
        <id>Q8VD37-5</id>
        <name>5</name>
        <sequence type="described" ref="VSP_020281 VSP_020283"/>
    </isoform>
    <isoform>
        <id>Q8VD37-6</id>
        <name>6</name>
        <name>SGIP1alpha</name>
        <sequence type="described" ref="VSP_043987 VSP_020285"/>
    </isoform>
    <isoform>
        <id>Q8VD37-8</id>
        <name>7</name>
        <sequence type="described" ref="VSP_020285"/>
    </isoform>
</comment>
<comment type="tissue specificity">
    <text evidence="7">Detected in brain, spinal cord and cerebellum.</text>
</comment>
<comment type="induction">
    <text evidence="5">Up-regulated in the hypothalamus of obese mice.</text>
</comment>
<comment type="miscellaneous">
    <molecule>Isoform 6</molecule>
    <text evidence="10">The N-terminal domain (1-97) of this isoform mediates binding to and tubulation of membranes.</text>
</comment>
<evidence type="ECO:0000250" key="1">
    <source>
        <dbReference type="UniProtKB" id="P0DJJ3"/>
    </source>
</evidence>
<evidence type="ECO:0000250" key="2">
    <source>
        <dbReference type="UniProtKB" id="Q9BQI5"/>
    </source>
</evidence>
<evidence type="ECO:0000255" key="3">
    <source>
        <dbReference type="PROSITE-ProRule" id="PRU00404"/>
    </source>
</evidence>
<evidence type="ECO:0000256" key="4">
    <source>
        <dbReference type="SAM" id="MobiDB-lite"/>
    </source>
</evidence>
<evidence type="ECO:0000269" key="5">
    <source>
    </source>
</evidence>
<evidence type="ECO:0000269" key="6">
    <source>
    </source>
</evidence>
<evidence type="ECO:0000269" key="7">
    <source>
    </source>
</evidence>
<evidence type="ECO:0000303" key="8">
    <source>
    </source>
</evidence>
<evidence type="ECO:0000303" key="9">
    <source>
    </source>
</evidence>
<evidence type="ECO:0000305" key="10"/>
<evidence type="ECO:0000305" key="11">
    <source>
    </source>
</evidence>
<evidence type="ECO:0007744" key="12">
    <source>
    </source>
</evidence>
<evidence type="ECO:0007744" key="13">
    <source>
    </source>
</evidence>
<accession>Q8VD37</accession>
<accession>A7BFW0</accession>
<accession>Q3UFU3</accession>
<accession>Q3UGA0</accession>
<accession>Q8BXX4</accession>
<accession>Q8C034</accession>
<accession>Q9CXT2</accession>
<dbReference type="EMBL" id="AB262964">
    <property type="protein sequence ID" value="BAF74784.1"/>
    <property type="molecule type" value="mRNA"/>
</dbReference>
<dbReference type="EMBL" id="AK014022">
    <property type="protein sequence ID" value="BAB29118.1"/>
    <property type="molecule type" value="mRNA"/>
</dbReference>
<dbReference type="EMBL" id="AK032439">
    <property type="protein sequence ID" value="BAC27870.1"/>
    <property type="molecule type" value="mRNA"/>
</dbReference>
<dbReference type="EMBL" id="AK043018">
    <property type="protein sequence ID" value="BAC31435.1"/>
    <property type="molecule type" value="mRNA"/>
</dbReference>
<dbReference type="EMBL" id="AK148043">
    <property type="protein sequence ID" value="BAE28309.1"/>
    <property type="molecule type" value="mRNA"/>
</dbReference>
<dbReference type="EMBL" id="AK148302">
    <property type="protein sequence ID" value="BAE28466.1"/>
    <property type="molecule type" value="mRNA"/>
</dbReference>
<dbReference type="EMBL" id="BC017596">
    <property type="protein sequence ID" value="AAH17596.1"/>
    <property type="molecule type" value="mRNA"/>
</dbReference>
<dbReference type="CCDS" id="CCDS18404.1">
    <molecule id="Q8VD37-1"/>
</dbReference>
<dbReference type="CCDS" id="CCDS71429.1">
    <molecule id="Q8VD37-3"/>
</dbReference>
<dbReference type="CCDS" id="CCDS71430.1">
    <molecule id="Q8VD37-4"/>
</dbReference>
<dbReference type="RefSeq" id="NP_001272781.1">
    <molecule id="Q8VD37-6"/>
    <property type="nucleotide sequence ID" value="NM_001285852.1"/>
</dbReference>
<dbReference type="RefSeq" id="NP_001272788.1">
    <molecule id="Q8VD37-3"/>
    <property type="nucleotide sequence ID" value="NM_001285859.1"/>
</dbReference>
<dbReference type="RefSeq" id="NP_001272789.1">
    <molecule id="Q8VD37-4"/>
    <property type="nucleotide sequence ID" value="NM_001285860.1"/>
</dbReference>
<dbReference type="RefSeq" id="NP_001272791.1">
    <property type="nucleotide sequence ID" value="NM_001285862.1"/>
</dbReference>
<dbReference type="RefSeq" id="NP_659155.1">
    <molecule id="Q8VD37-1"/>
    <property type="nucleotide sequence ID" value="NM_144906.2"/>
</dbReference>
<dbReference type="RefSeq" id="XP_006503491.1">
    <molecule id="Q8VD37-8"/>
    <property type="nucleotide sequence ID" value="XM_006503428.4"/>
</dbReference>
<dbReference type="RefSeq" id="XP_017175890.1">
    <property type="nucleotide sequence ID" value="XM_017320401.1"/>
</dbReference>
<dbReference type="SMR" id="Q8VD37"/>
<dbReference type="BioGRID" id="215766">
    <property type="interactions" value="14"/>
</dbReference>
<dbReference type="FunCoup" id="Q8VD37">
    <property type="interactions" value="858"/>
</dbReference>
<dbReference type="IntAct" id="Q8VD37">
    <property type="interactions" value="7"/>
</dbReference>
<dbReference type="MINT" id="Q8VD37"/>
<dbReference type="STRING" id="10090.ENSMUSP00000079553"/>
<dbReference type="GlyGen" id="Q8VD37">
    <property type="glycosylation" value="4 sites, 1 N-linked glycan (1 site), 1 O-linked glycan (2 sites)"/>
</dbReference>
<dbReference type="iPTMnet" id="Q8VD37"/>
<dbReference type="PhosphoSitePlus" id="Q8VD37"/>
<dbReference type="SwissPalm" id="Q8VD37"/>
<dbReference type="PaxDb" id="10090-ENSMUSP00000079553"/>
<dbReference type="PeptideAtlas" id="Q8VD37"/>
<dbReference type="ProteomicsDB" id="256980">
    <molecule id="Q8VD37-1"/>
</dbReference>
<dbReference type="ProteomicsDB" id="256981">
    <molecule id="Q8VD37-2"/>
</dbReference>
<dbReference type="ProteomicsDB" id="256982">
    <molecule id="Q8VD37-3"/>
</dbReference>
<dbReference type="ProteomicsDB" id="256983">
    <molecule id="Q8VD37-4"/>
</dbReference>
<dbReference type="ProteomicsDB" id="256984">
    <molecule id="Q8VD37-5"/>
</dbReference>
<dbReference type="ProteomicsDB" id="256985">
    <molecule id="Q8VD37-6"/>
</dbReference>
<dbReference type="ProteomicsDB" id="256986">
    <molecule id="Q8VD37-8"/>
</dbReference>
<dbReference type="Antibodypedia" id="51610">
    <property type="antibodies" value="80 antibodies from 20 providers"/>
</dbReference>
<dbReference type="DNASU" id="73094"/>
<dbReference type="Ensembl" id="ENSMUST00000066824.14">
    <molecule id="Q8VD37-3"/>
    <property type="protein sequence ID" value="ENSMUSP00000063712.8"/>
    <property type="gene ID" value="ENSMUSG00000028524.22"/>
</dbReference>
<dbReference type="Ensembl" id="ENSMUST00000072481.12">
    <molecule id="Q8VD37-4"/>
    <property type="protein sequence ID" value="ENSMUSP00000072301.6"/>
    <property type="gene ID" value="ENSMUSG00000028524.22"/>
</dbReference>
<dbReference type="Ensembl" id="ENSMUST00000080728.13">
    <molecule id="Q8VD37-1"/>
    <property type="protein sequence ID" value="ENSMUSP00000079553.7"/>
    <property type="gene ID" value="ENSMUSG00000028524.22"/>
</dbReference>
<dbReference type="Ensembl" id="ENSMUST00000106882.9">
    <molecule id="Q8VD37-8"/>
    <property type="protein sequence ID" value="ENSMUSP00000102495.3"/>
    <property type="gene ID" value="ENSMUSG00000028524.22"/>
</dbReference>
<dbReference type="Ensembl" id="ENSMUST00000183855.8">
    <molecule id="Q8VD37-5"/>
    <property type="protein sequence ID" value="ENSMUSP00000139337.2"/>
    <property type="gene ID" value="ENSMUSG00000028524.22"/>
</dbReference>
<dbReference type="GeneID" id="73094"/>
<dbReference type="KEGG" id="mmu:73094"/>
<dbReference type="UCSC" id="uc008two.2">
    <molecule id="Q8VD37-1"/>
    <property type="organism name" value="mouse"/>
</dbReference>
<dbReference type="UCSC" id="uc008twq.2">
    <molecule id="Q8VD37-6"/>
    <property type="organism name" value="mouse"/>
</dbReference>
<dbReference type="UCSC" id="uc008twr.2">
    <molecule id="Q8VD37-3"/>
    <property type="organism name" value="mouse"/>
</dbReference>
<dbReference type="UCSC" id="uc008tws.2">
    <molecule id="Q8VD37-4"/>
    <property type="organism name" value="mouse"/>
</dbReference>
<dbReference type="UCSC" id="uc008twt.2">
    <molecule id="Q8VD37-2"/>
    <property type="organism name" value="mouse"/>
</dbReference>
<dbReference type="AGR" id="MGI:1920344"/>
<dbReference type="CTD" id="84251"/>
<dbReference type="MGI" id="MGI:1920344">
    <property type="gene designation" value="Sgip1"/>
</dbReference>
<dbReference type="VEuPathDB" id="HostDB:ENSMUSG00000028524"/>
<dbReference type="eggNOG" id="KOG2398">
    <property type="taxonomic scope" value="Eukaryota"/>
</dbReference>
<dbReference type="GeneTree" id="ENSGT00940000156301"/>
<dbReference type="HOGENOM" id="CLU_1673330_0_0_1"/>
<dbReference type="InParanoid" id="Q8VD37"/>
<dbReference type="OMA" id="KECNSAT"/>
<dbReference type="TreeFam" id="TF328986"/>
<dbReference type="BioGRID-ORCS" id="73094">
    <property type="hits" value="7 hits in 78 CRISPR screens"/>
</dbReference>
<dbReference type="CD-CODE" id="CE726F99">
    <property type="entry name" value="Postsynaptic density"/>
</dbReference>
<dbReference type="ChiTaRS" id="Sgip1">
    <property type="organism name" value="mouse"/>
</dbReference>
<dbReference type="PRO" id="PR:Q8VD37"/>
<dbReference type="Proteomes" id="UP000000589">
    <property type="component" value="Chromosome 4"/>
</dbReference>
<dbReference type="RNAct" id="Q8VD37">
    <property type="molecule type" value="protein"/>
</dbReference>
<dbReference type="Bgee" id="ENSMUSG00000028524">
    <property type="expression patterns" value="Expressed in rostral migratory stream and 189 other cell types or tissues"/>
</dbReference>
<dbReference type="ExpressionAtlas" id="Q8VD37">
    <property type="expression patterns" value="baseline and differential"/>
</dbReference>
<dbReference type="GO" id="GO:0030122">
    <property type="term" value="C:AP-2 adaptor complex"/>
    <property type="evidence" value="ECO:0000314"/>
    <property type="project" value="UniProtKB"/>
</dbReference>
<dbReference type="GO" id="GO:0030136">
    <property type="term" value="C:clathrin-coated vesicle"/>
    <property type="evidence" value="ECO:0000314"/>
    <property type="project" value="MGI"/>
</dbReference>
<dbReference type="GO" id="GO:0005737">
    <property type="term" value="C:cytoplasm"/>
    <property type="evidence" value="ECO:0000250"/>
    <property type="project" value="UniProtKB"/>
</dbReference>
<dbReference type="GO" id="GO:0005886">
    <property type="term" value="C:plasma membrane"/>
    <property type="evidence" value="ECO:0000314"/>
    <property type="project" value="UniProtKB"/>
</dbReference>
<dbReference type="GO" id="GO:0098793">
    <property type="term" value="C:presynapse"/>
    <property type="evidence" value="ECO:0000314"/>
    <property type="project" value="SynGO"/>
</dbReference>
<dbReference type="GO" id="GO:0008017">
    <property type="term" value="F:microtubule binding"/>
    <property type="evidence" value="ECO:0000314"/>
    <property type="project" value="UniProtKB"/>
</dbReference>
<dbReference type="GO" id="GO:0005543">
    <property type="term" value="F:phospholipid binding"/>
    <property type="evidence" value="ECO:0000314"/>
    <property type="project" value="MGI"/>
</dbReference>
<dbReference type="GO" id="GO:0017124">
    <property type="term" value="F:SH3 domain binding"/>
    <property type="evidence" value="ECO:0007669"/>
    <property type="project" value="Ensembl"/>
</dbReference>
<dbReference type="GO" id="GO:0015631">
    <property type="term" value="F:tubulin binding"/>
    <property type="evidence" value="ECO:0000353"/>
    <property type="project" value="MGI"/>
</dbReference>
<dbReference type="GO" id="GO:0072583">
    <property type="term" value="P:clathrin-dependent endocytosis"/>
    <property type="evidence" value="ECO:0007669"/>
    <property type="project" value="InterPro"/>
</dbReference>
<dbReference type="GO" id="GO:0097009">
    <property type="term" value="P:energy homeostasis"/>
    <property type="evidence" value="ECO:0000250"/>
    <property type="project" value="UniProtKB"/>
</dbReference>
<dbReference type="GO" id="GO:0097320">
    <property type="term" value="P:plasma membrane tubulation"/>
    <property type="evidence" value="ECO:0000314"/>
    <property type="project" value="MGI"/>
</dbReference>
<dbReference type="GO" id="GO:2000253">
    <property type="term" value="P:positive regulation of feeding behavior"/>
    <property type="evidence" value="ECO:0000250"/>
    <property type="project" value="UniProtKB"/>
</dbReference>
<dbReference type="GO" id="GO:0048260">
    <property type="term" value="P:positive regulation of receptor-mediated endocytosis"/>
    <property type="evidence" value="ECO:0000315"/>
    <property type="project" value="MGI"/>
</dbReference>
<dbReference type="GO" id="GO:0002021">
    <property type="term" value="P:response to dietary excess"/>
    <property type="evidence" value="ECO:0000250"/>
    <property type="project" value="UniProtKB"/>
</dbReference>
<dbReference type="GO" id="GO:0048488">
    <property type="term" value="P:synaptic vesicle endocytosis"/>
    <property type="evidence" value="ECO:0000314"/>
    <property type="project" value="SynGO"/>
</dbReference>
<dbReference type="CDD" id="cd09266">
    <property type="entry name" value="SGIP1_MHD"/>
    <property type="match status" value="1"/>
</dbReference>
<dbReference type="InterPro" id="IPR036168">
    <property type="entry name" value="AP2_Mu_C_sf"/>
</dbReference>
<dbReference type="InterPro" id="IPR028565">
    <property type="entry name" value="MHD"/>
</dbReference>
<dbReference type="InterPro" id="IPR018808">
    <property type="entry name" value="Muniscin_C"/>
</dbReference>
<dbReference type="InterPro" id="IPR037984">
    <property type="entry name" value="SGIP1_MHD"/>
</dbReference>
<dbReference type="PANTHER" id="PTHR23065:SF8">
    <property type="entry name" value="F-BAR DOMAIN ONLY PROTEIN 2"/>
    <property type="match status" value="1"/>
</dbReference>
<dbReference type="PANTHER" id="PTHR23065">
    <property type="entry name" value="PROLINE-SERINE-THREONINE PHOSPHATASE INTERACTING PROTEIN 1"/>
    <property type="match status" value="1"/>
</dbReference>
<dbReference type="Pfam" id="PF10291">
    <property type="entry name" value="muHD"/>
    <property type="match status" value="1"/>
</dbReference>
<dbReference type="SUPFAM" id="SSF49447">
    <property type="entry name" value="Second domain of Mu2 adaptin subunit (ap50) of ap2 adaptor"/>
    <property type="match status" value="1"/>
</dbReference>
<dbReference type="PROSITE" id="PS51072">
    <property type="entry name" value="MHD"/>
    <property type="match status" value="1"/>
</dbReference>
<reference key="1">
    <citation type="journal article" date="2007" name="J. Biol. Chem.">
        <title>SGIP1alpha is an endocytic protein that directly interacts with phospholipids and Eps15.</title>
        <authorList>
            <person name="Uezu A."/>
            <person name="Horiuchi A."/>
            <person name="Kanda K."/>
            <person name="Kikuchi N."/>
            <person name="Umeda K."/>
            <person name="Tsujita K."/>
            <person name="Suetsugu S."/>
            <person name="Araki N."/>
            <person name="Yamamoto H."/>
            <person name="Takenawa T."/>
            <person name="Nakanishi H."/>
        </authorList>
    </citation>
    <scope>NUCLEOTIDE SEQUENCE [MRNA] (ISOFORM 6)</scope>
    <scope>FUNCTION IN ENDOCYTOSIS</scope>
    <scope>LIPID-BINDING</scope>
    <scope>SUBCELLULAR LOCATION</scope>
    <scope>INTERACTION WITH AP2A1 AND EPS15</scope>
</reference>
<reference key="2">
    <citation type="journal article" date="2005" name="Science">
        <title>The transcriptional landscape of the mammalian genome.</title>
        <authorList>
            <person name="Carninci P."/>
            <person name="Kasukawa T."/>
            <person name="Katayama S."/>
            <person name="Gough J."/>
            <person name="Frith M.C."/>
            <person name="Maeda N."/>
            <person name="Oyama R."/>
            <person name="Ravasi T."/>
            <person name="Lenhard B."/>
            <person name="Wells C."/>
            <person name="Kodzius R."/>
            <person name="Shimokawa K."/>
            <person name="Bajic V.B."/>
            <person name="Brenner S.E."/>
            <person name="Batalov S."/>
            <person name="Forrest A.R."/>
            <person name="Zavolan M."/>
            <person name="Davis M.J."/>
            <person name="Wilming L.G."/>
            <person name="Aidinis V."/>
            <person name="Allen J.E."/>
            <person name="Ambesi-Impiombato A."/>
            <person name="Apweiler R."/>
            <person name="Aturaliya R.N."/>
            <person name="Bailey T.L."/>
            <person name="Bansal M."/>
            <person name="Baxter L."/>
            <person name="Beisel K.W."/>
            <person name="Bersano T."/>
            <person name="Bono H."/>
            <person name="Chalk A.M."/>
            <person name="Chiu K.P."/>
            <person name="Choudhary V."/>
            <person name="Christoffels A."/>
            <person name="Clutterbuck D.R."/>
            <person name="Crowe M.L."/>
            <person name="Dalla E."/>
            <person name="Dalrymple B.P."/>
            <person name="de Bono B."/>
            <person name="Della Gatta G."/>
            <person name="di Bernardo D."/>
            <person name="Down T."/>
            <person name="Engstrom P."/>
            <person name="Fagiolini M."/>
            <person name="Faulkner G."/>
            <person name="Fletcher C.F."/>
            <person name="Fukushima T."/>
            <person name="Furuno M."/>
            <person name="Futaki S."/>
            <person name="Gariboldi M."/>
            <person name="Georgii-Hemming P."/>
            <person name="Gingeras T.R."/>
            <person name="Gojobori T."/>
            <person name="Green R.E."/>
            <person name="Gustincich S."/>
            <person name="Harbers M."/>
            <person name="Hayashi Y."/>
            <person name="Hensch T.K."/>
            <person name="Hirokawa N."/>
            <person name="Hill D."/>
            <person name="Huminiecki L."/>
            <person name="Iacono M."/>
            <person name="Ikeo K."/>
            <person name="Iwama A."/>
            <person name="Ishikawa T."/>
            <person name="Jakt M."/>
            <person name="Kanapin A."/>
            <person name="Katoh M."/>
            <person name="Kawasawa Y."/>
            <person name="Kelso J."/>
            <person name="Kitamura H."/>
            <person name="Kitano H."/>
            <person name="Kollias G."/>
            <person name="Krishnan S.P."/>
            <person name="Kruger A."/>
            <person name="Kummerfeld S.K."/>
            <person name="Kurochkin I.V."/>
            <person name="Lareau L.F."/>
            <person name="Lazarevic D."/>
            <person name="Lipovich L."/>
            <person name="Liu J."/>
            <person name="Liuni S."/>
            <person name="McWilliam S."/>
            <person name="Madan Babu M."/>
            <person name="Madera M."/>
            <person name="Marchionni L."/>
            <person name="Matsuda H."/>
            <person name="Matsuzawa S."/>
            <person name="Miki H."/>
            <person name="Mignone F."/>
            <person name="Miyake S."/>
            <person name="Morris K."/>
            <person name="Mottagui-Tabar S."/>
            <person name="Mulder N."/>
            <person name="Nakano N."/>
            <person name="Nakauchi H."/>
            <person name="Ng P."/>
            <person name="Nilsson R."/>
            <person name="Nishiguchi S."/>
            <person name="Nishikawa S."/>
            <person name="Nori F."/>
            <person name="Ohara O."/>
            <person name="Okazaki Y."/>
            <person name="Orlando V."/>
            <person name="Pang K.C."/>
            <person name="Pavan W.J."/>
            <person name="Pavesi G."/>
            <person name="Pesole G."/>
            <person name="Petrovsky N."/>
            <person name="Piazza S."/>
            <person name="Reed J."/>
            <person name="Reid J.F."/>
            <person name="Ring B.Z."/>
            <person name="Ringwald M."/>
            <person name="Rost B."/>
            <person name="Ruan Y."/>
            <person name="Salzberg S.L."/>
            <person name="Sandelin A."/>
            <person name="Schneider C."/>
            <person name="Schoenbach C."/>
            <person name="Sekiguchi K."/>
            <person name="Semple C.A."/>
            <person name="Seno S."/>
            <person name="Sessa L."/>
            <person name="Sheng Y."/>
            <person name="Shibata Y."/>
            <person name="Shimada H."/>
            <person name="Shimada K."/>
            <person name="Silva D."/>
            <person name="Sinclair B."/>
            <person name="Sperling S."/>
            <person name="Stupka E."/>
            <person name="Sugiura K."/>
            <person name="Sultana R."/>
            <person name="Takenaka Y."/>
            <person name="Taki K."/>
            <person name="Tammoja K."/>
            <person name="Tan S.L."/>
            <person name="Tang S."/>
            <person name="Taylor M.S."/>
            <person name="Tegner J."/>
            <person name="Teichmann S.A."/>
            <person name="Ueda H.R."/>
            <person name="van Nimwegen E."/>
            <person name="Verardo R."/>
            <person name="Wei C.L."/>
            <person name="Yagi K."/>
            <person name="Yamanishi H."/>
            <person name="Zabarovsky E."/>
            <person name="Zhu S."/>
            <person name="Zimmer A."/>
            <person name="Hide W."/>
            <person name="Bult C."/>
            <person name="Grimmond S.M."/>
            <person name="Teasdale R.D."/>
            <person name="Liu E.T."/>
            <person name="Brusic V."/>
            <person name="Quackenbush J."/>
            <person name="Wahlestedt C."/>
            <person name="Mattick J.S."/>
            <person name="Hume D.A."/>
            <person name="Kai C."/>
            <person name="Sasaki D."/>
            <person name="Tomaru Y."/>
            <person name="Fukuda S."/>
            <person name="Kanamori-Katayama M."/>
            <person name="Suzuki M."/>
            <person name="Aoki J."/>
            <person name="Arakawa T."/>
            <person name="Iida J."/>
            <person name="Imamura K."/>
            <person name="Itoh M."/>
            <person name="Kato T."/>
            <person name="Kawaji H."/>
            <person name="Kawagashira N."/>
            <person name="Kawashima T."/>
            <person name="Kojima M."/>
            <person name="Kondo S."/>
            <person name="Konno H."/>
            <person name="Nakano K."/>
            <person name="Ninomiya N."/>
            <person name="Nishio T."/>
            <person name="Okada M."/>
            <person name="Plessy C."/>
            <person name="Shibata K."/>
            <person name="Shiraki T."/>
            <person name="Suzuki S."/>
            <person name="Tagami M."/>
            <person name="Waki K."/>
            <person name="Watahiki A."/>
            <person name="Okamura-Oho Y."/>
            <person name="Suzuki H."/>
            <person name="Kawai J."/>
            <person name="Hayashizaki Y."/>
        </authorList>
    </citation>
    <scope>NUCLEOTIDE SEQUENCE [LARGE SCALE MRNA] (ISOFORMS 2; 3; 4 AND 5)</scope>
    <source>
        <strain>C57BL/6J</strain>
        <tissue>Cerebellum</tissue>
        <tissue>Embryonic head</tissue>
        <tissue>Melanoma</tissue>
        <tissue>Olfactory bulb</tissue>
    </source>
</reference>
<reference key="3">
    <citation type="journal article" date="2004" name="Genome Res.">
        <title>The status, quality, and expansion of the NIH full-length cDNA project: the Mammalian Gene Collection (MGC).</title>
        <authorList>
            <consortium name="The MGC Project Team"/>
        </authorList>
    </citation>
    <scope>NUCLEOTIDE SEQUENCE [LARGE SCALE MRNA] (ISOFORM 1)</scope>
    <source>
        <tissue>Retina</tissue>
    </source>
</reference>
<reference key="4">
    <citation type="journal article" date="2004" name="Mol. Cell. Proteomics">
        <title>Phosphoproteomic analysis of the developing mouse brain.</title>
        <authorList>
            <person name="Ballif B.A."/>
            <person name="Villen J."/>
            <person name="Beausoleil S.A."/>
            <person name="Schwartz D."/>
            <person name="Gygi S.P."/>
        </authorList>
    </citation>
    <scope>IDENTIFICATION BY MASS SPECTROMETRY [LARGE SCALE ANALYSIS]</scope>
    <source>
        <tissue>Embryonic brain</tissue>
    </source>
</reference>
<reference key="5">
    <citation type="journal article" date="2005" name="Endocrinology">
        <title>Src homology 3-domain growth factor receptor-bound 2-like (endophilin) interacting protein 1, a novel neuronal protein that regulates energy balance.</title>
        <authorList>
            <person name="Trevaskis J."/>
            <person name="Walder K."/>
            <person name="Foletta V."/>
            <person name="Kerr-Bayles L."/>
            <person name="McMillan J."/>
            <person name="Cooper A."/>
            <person name="Lee S."/>
            <person name="Bolton K."/>
            <person name="Prior M."/>
            <person name="Fahey R."/>
            <person name="Whitecross K."/>
            <person name="Morton G.J."/>
            <person name="Schwartz M.W."/>
            <person name="Collier G.R."/>
        </authorList>
    </citation>
    <scope>INDUCTION</scope>
</reference>
<reference key="6">
    <citation type="journal article" date="2006" name="Mol. Cell. Proteomics">
        <title>Comprehensive identification of phosphorylation sites in postsynaptic density preparations.</title>
        <authorList>
            <person name="Trinidad J.C."/>
            <person name="Specht C.G."/>
            <person name="Thalhammer A."/>
            <person name="Schoepfer R."/>
            <person name="Burlingame A.L."/>
        </authorList>
    </citation>
    <scope>PHOSPHORYLATION [LARGE SCALE ANALYSIS] AT SER-300</scope>
    <scope>IDENTIFICATION BY MASS SPECTROMETRY [LARGE SCALE ANALYSIS]</scope>
    <source>
        <tissue>Brain</tissue>
    </source>
</reference>
<reference key="7">
    <citation type="journal article" date="2010" name="Cell">
        <title>A tissue-specific atlas of mouse protein phosphorylation and expression.</title>
        <authorList>
            <person name="Huttlin E.L."/>
            <person name="Jedrychowski M.P."/>
            <person name="Elias J.E."/>
            <person name="Goswami T."/>
            <person name="Rad R."/>
            <person name="Beausoleil S.A."/>
            <person name="Villen J."/>
            <person name="Haas W."/>
            <person name="Sowa M.E."/>
            <person name="Gygi S.P."/>
        </authorList>
    </citation>
    <scope>PHOSPHORYLATION [LARGE SCALE ANALYSIS] AT SER-78; SER-149; SER-151; SER-156; THR-180; THR-182; THR-247; THR-259; SER-265; SER-287; SER-289; SER-300; SER-316; SER-319; THR-324; THR-328; SER-371; SER-398; THR-409 AND SER-484</scope>
    <scope>PHOSPHORYLATION [LARGE SCALE ANALYSIS] AT SER-243 (ISOFORM 2)</scope>
    <scope>PHOSPHORYLATION [LARGE SCALE ANALYSIS] AT SER-338 (ISOFORM 3)</scope>
    <scope>PHOSPHORYLATION [LARGE SCALE ANALYSIS] AT SER-274 (ISOFORMS 3 AND 4)</scope>
    <scope>PHOSPHORYLATION [LARGE SCALE ANALYSIS] AT SER-533 (ISOFORM 6)</scope>
    <scope>PHOSPHORYLATION [LARGE SCALE ANALYSIS] AT SER-505 (ISOFORM 7)</scope>
    <scope>IDENTIFICATION BY MASS SPECTROMETRY [LARGE SCALE ANALYSIS]</scope>
    <source>
        <tissue>Brain</tissue>
        <tissue>Brown adipose tissue</tissue>
        <tissue>Lung</tissue>
    </source>
</reference>
<reference key="8">
    <citation type="journal article" date="2011" name="PLoS ONE">
        <title>Enhanced clathrin-dependent endocytosis in the absence of calnexin.</title>
        <authorList>
            <person name="Li H.D."/>
            <person name="Liu W.X."/>
            <person name="Michalak M."/>
        </authorList>
    </citation>
    <scope>FUNCTION</scope>
    <scope>ALTERNATIVE SPLICING (ISOFORM 7)</scope>
    <scope>INTERACTION WITH CANX</scope>
    <scope>TISSUE SPECIFICITY</scope>
</reference>
<protein>
    <recommendedName>
        <fullName>SH3-containing GRB2-like protein 3-interacting protein 1</fullName>
    </recommendedName>
    <alternativeName>
        <fullName>Endophilin-3-interacting protein</fullName>
    </alternativeName>
</protein>